<proteinExistence type="evidence at transcript level"/>
<feature type="chain" id="PRO_0000148553" description="Argininosuccinate synthase">
    <location>
        <begin position="1"/>
        <end position="412"/>
    </location>
</feature>
<feature type="binding site" evidence="1">
    <location>
        <begin position="10"/>
        <end position="18"/>
    </location>
    <ligand>
        <name>ATP</name>
        <dbReference type="ChEBI" id="CHEBI:30616"/>
    </ligand>
</feature>
<feature type="binding site" evidence="1">
    <location>
        <position position="36"/>
    </location>
    <ligand>
        <name>ATP</name>
        <dbReference type="ChEBI" id="CHEBI:30616"/>
    </ligand>
</feature>
<feature type="binding site" evidence="1">
    <location>
        <position position="87"/>
    </location>
    <ligand>
        <name>L-citrulline</name>
        <dbReference type="ChEBI" id="CHEBI:57743"/>
    </ligand>
</feature>
<feature type="binding site" evidence="1">
    <location>
        <position position="92"/>
    </location>
    <ligand>
        <name>L-citrulline</name>
        <dbReference type="ChEBI" id="CHEBI:57743"/>
    </ligand>
</feature>
<feature type="binding site" evidence="1">
    <location>
        <begin position="115"/>
        <end position="123"/>
    </location>
    <ligand>
        <name>ATP</name>
        <dbReference type="ChEBI" id="CHEBI:30616"/>
    </ligand>
</feature>
<feature type="binding site" evidence="1">
    <location>
        <position position="119"/>
    </location>
    <ligand>
        <name>L-aspartate</name>
        <dbReference type="ChEBI" id="CHEBI:29991"/>
    </ligand>
</feature>
<feature type="binding site" evidence="1">
    <location>
        <position position="123"/>
    </location>
    <ligand>
        <name>L-aspartate</name>
        <dbReference type="ChEBI" id="CHEBI:29991"/>
    </ligand>
</feature>
<feature type="binding site" evidence="1">
    <location>
        <position position="123"/>
    </location>
    <ligand>
        <name>L-citrulline</name>
        <dbReference type="ChEBI" id="CHEBI:57743"/>
    </ligand>
</feature>
<feature type="binding site" evidence="1">
    <location>
        <position position="124"/>
    </location>
    <ligand>
        <name>L-aspartate</name>
        <dbReference type="ChEBI" id="CHEBI:29991"/>
    </ligand>
</feature>
<feature type="binding site" evidence="1">
    <location>
        <position position="127"/>
    </location>
    <ligand>
        <name>L-citrulline</name>
        <dbReference type="ChEBI" id="CHEBI:57743"/>
    </ligand>
</feature>
<feature type="binding site" evidence="1">
    <location>
        <position position="180"/>
    </location>
    <ligand>
        <name>L-citrulline</name>
        <dbReference type="ChEBI" id="CHEBI:57743"/>
    </ligand>
</feature>
<feature type="binding site" evidence="1">
    <location>
        <position position="189"/>
    </location>
    <ligand>
        <name>L-citrulline</name>
        <dbReference type="ChEBI" id="CHEBI:57743"/>
    </ligand>
</feature>
<feature type="binding site" evidence="1">
    <location>
        <position position="270"/>
    </location>
    <ligand>
        <name>L-citrulline</name>
        <dbReference type="ChEBI" id="CHEBI:57743"/>
    </ligand>
</feature>
<feature type="binding site" evidence="1">
    <location>
        <position position="282"/>
    </location>
    <ligand>
        <name>L-citrulline</name>
        <dbReference type="ChEBI" id="CHEBI:57743"/>
    </ligand>
</feature>
<feature type="modified residue" description="Phosphotyrosine" evidence="2">
    <location>
        <position position="87"/>
    </location>
</feature>
<feature type="modified residue" description="N6-acetyllysine" evidence="3">
    <location>
        <position position="112"/>
    </location>
</feature>
<feature type="modified residue" description="Phosphotyrosine" evidence="1">
    <location>
        <position position="113"/>
    </location>
</feature>
<feature type="modified residue" description="N6-acetyllysine; by CLOCK" evidence="1">
    <location>
        <position position="165"/>
    </location>
</feature>
<feature type="modified residue" description="N6-acetyllysine; by CLOCK" evidence="1">
    <location>
        <position position="176"/>
    </location>
</feature>
<feature type="modified residue" description="Phosphoserine" evidence="1">
    <location>
        <position position="180"/>
    </location>
</feature>
<feature type="modified residue" description="Phosphoserine" evidence="3">
    <location>
        <position position="219"/>
    </location>
</feature>
<protein>
    <recommendedName>
        <fullName evidence="5">Argininosuccinate synthase</fullName>
        <ecNumber evidence="1">6.3.4.5</ecNumber>
    </recommendedName>
    <alternativeName>
        <fullName>Citrulline--aspartate ligase</fullName>
    </alternativeName>
</protein>
<accession>P14568</accession>
<accession>Q3T0A7</accession>
<dbReference type="EC" id="6.3.4.5" evidence="1"/>
<dbReference type="EMBL" id="M26198">
    <property type="protein sequence ID" value="AAA30388.1"/>
    <property type="molecule type" value="mRNA"/>
</dbReference>
<dbReference type="EMBL" id="BC102474">
    <property type="protein sequence ID" value="AAI02475.1"/>
    <property type="molecule type" value="mRNA"/>
</dbReference>
<dbReference type="PIR" id="A33986">
    <property type="entry name" value="AJBORS"/>
</dbReference>
<dbReference type="RefSeq" id="NP_776317.1">
    <property type="nucleotide sequence ID" value="NM_173892.4"/>
</dbReference>
<dbReference type="SMR" id="P14568"/>
<dbReference type="FunCoup" id="P14568">
    <property type="interactions" value="1343"/>
</dbReference>
<dbReference type="STRING" id="9913.ENSBTAP00000072835"/>
<dbReference type="iPTMnet" id="P14568"/>
<dbReference type="PaxDb" id="9913-ENSBTAP00000027649"/>
<dbReference type="PeptideAtlas" id="P14568"/>
<dbReference type="GeneID" id="280726"/>
<dbReference type="KEGG" id="bta:280726"/>
<dbReference type="CTD" id="445"/>
<dbReference type="VEuPathDB" id="HostDB:ENSBTAG00000020747"/>
<dbReference type="eggNOG" id="KOG1706">
    <property type="taxonomic scope" value="Eukaryota"/>
</dbReference>
<dbReference type="HOGENOM" id="CLU_032784_4_2_1"/>
<dbReference type="InParanoid" id="P14568"/>
<dbReference type="OMA" id="ACGAFHI"/>
<dbReference type="OrthoDB" id="1688907at2759"/>
<dbReference type="TreeFam" id="TF300736"/>
<dbReference type="Reactome" id="R-BTA-70635">
    <property type="pathway name" value="Urea cycle"/>
</dbReference>
<dbReference type="SABIO-RK" id="P14568"/>
<dbReference type="UniPathway" id="UPA00068">
    <property type="reaction ID" value="UER00113"/>
</dbReference>
<dbReference type="UniPathway" id="UPA00158">
    <property type="reaction ID" value="UER00272"/>
</dbReference>
<dbReference type="Proteomes" id="UP000009136">
    <property type="component" value="Chromosome 11"/>
</dbReference>
<dbReference type="Bgee" id="ENSBTAG00000020747">
    <property type="expression patterns" value="Expressed in cortex of kidney and 105 other cell types or tissues"/>
</dbReference>
<dbReference type="GO" id="GO:0005737">
    <property type="term" value="C:cytoplasm"/>
    <property type="evidence" value="ECO:0000318"/>
    <property type="project" value="GO_Central"/>
</dbReference>
<dbReference type="GO" id="GO:0005829">
    <property type="term" value="C:cytosol"/>
    <property type="evidence" value="ECO:0000250"/>
    <property type="project" value="UniProtKB"/>
</dbReference>
<dbReference type="GO" id="GO:0004055">
    <property type="term" value="F:argininosuccinate synthase activity"/>
    <property type="evidence" value="ECO:0000250"/>
    <property type="project" value="UniProtKB"/>
</dbReference>
<dbReference type="GO" id="GO:0005524">
    <property type="term" value="F:ATP binding"/>
    <property type="evidence" value="ECO:0007669"/>
    <property type="project" value="UniProtKB-KW"/>
</dbReference>
<dbReference type="GO" id="GO:0000053">
    <property type="term" value="P:argininosuccinate metabolic process"/>
    <property type="evidence" value="ECO:0000318"/>
    <property type="project" value="GO_Central"/>
</dbReference>
<dbReference type="GO" id="GO:0007623">
    <property type="term" value="P:circadian rhythm"/>
    <property type="evidence" value="ECO:0000250"/>
    <property type="project" value="UniProtKB"/>
</dbReference>
<dbReference type="GO" id="GO:0006526">
    <property type="term" value="P:L-arginine biosynthetic process"/>
    <property type="evidence" value="ECO:0000250"/>
    <property type="project" value="UniProtKB"/>
</dbReference>
<dbReference type="GO" id="GO:0000050">
    <property type="term" value="P:urea cycle"/>
    <property type="evidence" value="ECO:0000250"/>
    <property type="project" value="UniProtKB"/>
</dbReference>
<dbReference type="CDD" id="cd01999">
    <property type="entry name" value="ASS"/>
    <property type="match status" value="1"/>
</dbReference>
<dbReference type="FunFam" id="3.40.50.620:FF:000019">
    <property type="entry name" value="Argininosuccinate synthase"/>
    <property type="match status" value="1"/>
</dbReference>
<dbReference type="FunFam" id="1.20.5.470:FF:000003">
    <property type="entry name" value="Argininosuccinate synthase 1"/>
    <property type="match status" value="1"/>
</dbReference>
<dbReference type="FunFam" id="3.90.1260.10:FF:000005">
    <property type="entry name" value="Argininosuccinate synthase 1"/>
    <property type="match status" value="1"/>
</dbReference>
<dbReference type="Gene3D" id="3.90.1260.10">
    <property type="entry name" value="Argininosuccinate synthetase, chain A, domain 2"/>
    <property type="match status" value="1"/>
</dbReference>
<dbReference type="Gene3D" id="3.40.50.620">
    <property type="entry name" value="HUPs"/>
    <property type="match status" value="1"/>
</dbReference>
<dbReference type="Gene3D" id="1.20.5.470">
    <property type="entry name" value="Single helix bin"/>
    <property type="match status" value="1"/>
</dbReference>
<dbReference type="HAMAP" id="MF_00005">
    <property type="entry name" value="Arg_succ_synth_type1"/>
    <property type="match status" value="1"/>
</dbReference>
<dbReference type="InterPro" id="IPR048268">
    <property type="entry name" value="Arginosuc_syn_C"/>
</dbReference>
<dbReference type="InterPro" id="IPR048267">
    <property type="entry name" value="Arginosuc_syn_N"/>
</dbReference>
<dbReference type="InterPro" id="IPR001518">
    <property type="entry name" value="Arginosuc_synth"/>
</dbReference>
<dbReference type="InterPro" id="IPR018223">
    <property type="entry name" value="Arginosuc_synth_CS"/>
</dbReference>
<dbReference type="InterPro" id="IPR023434">
    <property type="entry name" value="Arginosuc_synth_type_1_subfam"/>
</dbReference>
<dbReference type="InterPro" id="IPR024074">
    <property type="entry name" value="AS_cat/multimer_dom_body"/>
</dbReference>
<dbReference type="InterPro" id="IPR014729">
    <property type="entry name" value="Rossmann-like_a/b/a_fold"/>
</dbReference>
<dbReference type="NCBIfam" id="TIGR00032">
    <property type="entry name" value="argG"/>
    <property type="match status" value="1"/>
</dbReference>
<dbReference type="NCBIfam" id="NF001770">
    <property type="entry name" value="PRK00509.1"/>
    <property type="match status" value="1"/>
</dbReference>
<dbReference type="PANTHER" id="PTHR11587">
    <property type="entry name" value="ARGININOSUCCINATE SYNTHASE"/>
    <property type="match status" value="1"/>
</dbReference>
<dbReference type="PANTHER" id="PTHR11587:SF2">
    <property type="entry name" value="ARGININOSUCCINATE SYNTHASE"/>
    <property type="match status" value="1"/>
</dbReference>
<dbReference type="Pfam" id="PF20979">
    <property type="entry name" value="Arginosuc_syn_C"/>
    <property type="match status" value="1"/>
</dbReference>
<dbReference type="Pfam" id="PF00764">
    <property type="entry name" value="Arginosuc_synth"/>
    <property type="match status" value="1"/>
</dbReference>
<dbReference type="SUPFAM" id="SSF52402">
    <property type="entry name" value="Adenine nucleotide alpha hydrolases-like"/>
    <property type="match status" value="1"/>
</dbReference>
<dbReference type="SUPFAM" id="SSF69864">
    <property type="entry name" value="Argininosuccinate synthetase, C-terminal domain"/>
    <property type="match status" value="1"/>
</dbReference>
<dbReference type="PROSITE" id="PS00564">
    <property type="entry name" value="ARGININOSUCCIN_SYN_1"/>
    <property type="match status" value="1"/>
</dbReference>
<dbReference type="PROSITE" id="PS00565">
    <property type="entry name" value="ARGININOSUCCIN_SYN_2"/>
    <property type="match status" value="1"/>
</dbReference>
<sequence length="412" mass="46417">MSGKGSVVLAYSGGLDTSCILVWLKEQGYDVIAYLANIGQKEDFEEARKKALKLGAKKVFIEDISKEFVEEFIWPAIQSSALYEDRYLLGTSLARPCIARKQVEIAQREGAKYVSHGATGKGNDQIRFELTCYSLAPQIKVIAPWRMPEFYNRFQGRNDLMEYAKQHGIPVPVTPKNPWSMDENLMHISYEAGILENPKNQAPPGLYTKTQDPAKAPNSPDMLEIEFKKGVPVKVTNVGDGTTHSTALELFLYLNEVAGKHGVGRIDIVENRFIGMKSRGIYETPAGTILYHAHLDIEAFTMDREVRKIKQGLGLKFAELVYTGFWHSPECEFVRHCIAKSQERVEGKVQVSVFKGQVYILGRESPLSLYNEELVSMNVQGDYEPVDATGFININSLRLKEYHRLQNKVTAK</sequence>
<keyword id="KW-0007">Acetylation</keyword>
<keyword id="KW-0028">Amino-acid biosynthesis</keyword>
<keyword id="KW-0055">Arginine biosynthesis</keyword>
<keyword id="KW-0067">ATP-binding</keyword>
<keyword id="KW-0963">Cytoplasm</keyword>
<keyword id="KW-0436">Ligase</keyword>
<keyword id="KW-0547">Nucleotide-binding</keyword>
<keyword id="KW-0597">Phosphoprotein</keyword>
<keyword id="KW-1185">Reference proteome</keyword>
<keyword id="KW-0835">Urea cycle</keyword>
<organism>
    <name type="scientific">Bos taurus</name>
    <name type="common">Bovine</name>
    <dbReference type="NCBI Taxonomy" id="9913"/>
    <lineage>
        <taxon>Eukaryota</taxon>
        <taxon>Metazoa</taxon>
        <taxon>Chordata</taxon>
        <taxon>Craniata</taxon>
        <taxon>Vertebrata</taxon>
        <taxon>Euteleostomi</taxon>
        <taxon>Mammalia</taxon>
        <taxon>Eutheria</taxon>
        <taxon>Laurasiatheria</taxon>
        <taxon>Artiodactyla</taxon>
        <taxon>Ruminantia</taxon>
        <taxon>Pecora</taxon>
        <taxon>Bovidae</taxon>
        <taxon>Bovinae</taxon>
        <taxon>Bos</taxon>
    </lineage>
</organism>
<reference key="1">
    <citation type="journal article" date="1989" name="Proc. Natl. Acad. Sci. U.S.A.">
        <title>Molecular definition of bovine argininosuccinate synthetase deficiency.</title>
        <authorList>
            <person name="Dennis J.A."/>
            <person name="Healy P.J."/>
            <person name="Beaudet A.L."/>
            <person name="O'Brien W.E."/>
        </authorList>
    </citation>
    <scope>NUCLEOTIDE SEQUENCE [MRNA]</scope>
    <scope>INVOLVEMENT IN CITRULLINEMIA</scope>
</reference>
<reference key="2">
    <citation type="submission" date="2005-08" db="EMBL/GenBank/DDBJ databases">
        <authorList>
            <consortium name="NIH - Mammalian Gene Collection (MGC) project"/>
        </authorList>
    </citation>
    <scope>NUCLEOTIDE SEQUENCE [LARGE SCALE MRNA]</scope>
    <source>
        <strain>Crossbred X Angus</strain>
        <tissue>Ileum</tissue>
    </source>
</reference>
<name>ASSY_BOVIN</name>
<evidence type="ECO:0000250" key="1">
    <source>
        <dbReference type="UniProtKB" id="P00966"/>
    </source>
</evidence>
<evidence type="ECO:0000250" key="2">
    <source>
        <dbReference type="UniProtKB" id="P09034"/>
    </source>
</evidence>
<evidence type="ECO:0000250" key="3">
    <source>
        <dbReference type="UniProtKB" id="P16460"/>
    </source>
</evidence>
<evidence type="ECO:0000269" key="4">
    <source>
    </source>
</evidence>
<evidence type="ECO:0000305" key="5"/>
<gene>
    <name evidence="1" type="primary">ASS1</name>
</gene>
<comment type="function">
    <text evidence="1">One of the enzymes of the urea cycle, the metabolic pathway transforming neurotoxic amonia produced by protein catabolism into inocuous urea in the liver of ureotelic animals. Catalyzes the formation of arginosuccinate from aspartate, citrulline and ATP and together with ASL it is responsible for the biosynthesis of arginine in most body tissues.</text>
</comment>
<comment type="catalytic activity">
    <reaction evidence="1">
        <text>L-citrulline + L-aspartate + ATP = 2-(N(omega)-L-arginino)succinate + AMP + diphosphate + H(+)</text>
        <dbReference type="Rhea" id="RHEA:10932"/>
        <dbReference type="ChEBI" id="CHEBI:15378"/>
        <dbReference type="ChEBI" id="CHEBI:29991"/>
        <dbReference type="ChEBI" id="CHEBI:30616"/>
        <dbReference type="ChEBI" id="CHEBI:33019"/>
        <dbReference type="ChEBI" id="CHEBI:57472"/>
        <dbReference type="ChEBI" id="CHEBI:57743"/>
        <dbReference type="ChEBI" id="CHEBI:456215"/>
        <dbReference type="EC" id="6.3.4.5"/>
    </reaction>
</comment>
<comment type="pathway">
    <text evidence="1">Amino-acid biosynthesis; L-arginine biosynthesis; L-arginine from L-ornithine and carbamoyl phosphate: step 2/3.</text>
</comment>
<comment type="pathway">
    <text evidence="1">Nitrogen metabolism; urea cycle; (N(omega)-L-arginino)succinate from L-aspartate and L-citrulline: step 1/1.</text>
</comment>
<comment type="subunit">
    <text evidence="1 3">Homotetramer. Interacts with NMRAL1. Interacts with CLOCK; in a circadian manner (By similarity). Forms tissue-specific complexes with ASL, SLC7A1, HSP90AA1 and nitric oxide synthase NOS1, NOS2 or NOS3; the complex regulates cell-autonomous L-arginine synthesis and citrulline recycling while channeling extracellular L-arginine to nitric oxide synthesis pathway (By similarity).</text>
</comment>
<comment type="subcellular location">
    <subcellularLocation>
        <location evidence="1">Cytoplasm</location>
        <location evidence="1">Cytosol</location>
    </subcellularLocation>
</comment>
<comment type="PTM">
    <text evidence="1">Acetylated by CLOCK in a circadian manner which negatively regulates its enzyme activity. Deacetylated by histone deacetylases.</text>
</comment>
<comment type="disease">
    <text evidence="4">Defects in ASS1 are the cause of a bovine form of citrullinemia.</text>
</comment>
<comment type="similarity">
    <text evidence="5">Belongs to the argininosuccinate synthase family. Type 1 subfamily.</text>
</comment>